<feature type="chain" id="PRO_1000138498" description="Anti-adapter protein IraM">
    <location>
        <begin position="1"/>
        <end position="107"/>
    </location>
</feature>
<protein>
    <recommendedName>
        <fullName evidence="1">Anti-adapter protein IraM</fullName>
    </recommendedName>
</protein>
<name>IRAM_ECODH</name>
<reference key="1">
    <citation type="journal article" date="2008" name="J. Bacteriol.">
        <title>The complete genome sequence of Escherichia coli DH10B: insights into the biology of a laboratory workhorse.</title>
        <authorList>
            <person name="Durfee T."/>
            <person name="Nelson R."/>
            <person name="Baldwin S."/>
            <person name="Plunkett G. III"/>
            <person name="Burland V."/>
            <person name="Mau B."/>
            <person name="Petrosino J.F."/>
            <person name="Qin X."/>
            <person name="Muzny D.M."/>
            <person name="Ayele M."/>
            <person name="Gibbs R.A."/>
            <person name="Csorgo B."/>
            <person name="Posfai G."/>
            <person name="Weinstock G.M."/>
            <person name="Blattner F.R."/>
        </authorList>
    </citation>
    <scope>NUCLEOTIDE SEQUENCE [LARGE SCALE GENOMIC DNA]</scope>
    <source>
        <strain>K12 / DH10B</strain>
    </source>
</reference>
<organism>
    <name type="scientific">Escherichia coli (strain K12 / DH10B)</name>
    <dbReference type="NCBI Taxonomy" id="316385"/>
    <lineage>
        <taxon>Bacteria</taxon>
        <taxon>Pseudomonadati</taxon>
        <taxon>Pseudomonadota</taxon>
        <taxon>Gammaproteobacteria</taxon>
        <taxon>Enterobacterales</taxon>
        <taxon>Enterobacteriaceae</taxon>
        <taxon>Escherichia</taxon>
    </lineage>
</organism>
<dbReference type="EMBL" id="CP000948">
    <property type="protein sequence ID" value="ACB02330.1"/>
    <property type="molecule type" value="Genomic_DNA"/>
</dbReference>
<dbReference type="RefSeq" id="WP_001295666.1">
    <property type="nucleotide sequence ID" value="NC_010473.1"/>
</dbReference>
<dbReference type="SMR" id="B1XA47"/>
<dbReference type="KEGG" id="ecd:ECDH10B_1209"/>
<dbReference type="HOGENOM" id="CLU_143527_1_0_6"/>
<dbReference type="GO" id="GO:0005737">
    <property type="term" value="C:cytoplasm"/>
    <property type="evidence" value="ECO:0007669"/>
    <property type="project" value="UniProtKB-SubCell"/>
</dbReference>
<dbReference type="GO" id="GO:0009267">
    <property type="term" value="P:cellular response to starvation"/>
    <property type="evidence" value="ECO:0007669"/>
    <property type="project" value="UniProtKB-UniRule"/>
</dbReference>
<dbReference type="FunFam" id="2.40.50.650:FF:000001">
    <property type="entry name" value="Anti-adapter protein IraM"/>
    <property type="match status" value="1"/>
</dbReference>
<dbReference type="Gene3D" id="2.40.50.650">
    <property type="match status" value="1"/>
</dbReference>
<dbReference type="HAMAP" id="MF_01199">
    <property type="entry name" value="Anti_adapt_IraM"/>
    <property type="match status" value="1"/>
</dbReference>
<dbReference type="InterPro" id="IPR014448">
    <property type="entry name" value="Anti-adapter_IraM"/>
</dbReference>
<dbReference type="InterPro" id="IPR038679">
    <property type="entry name" value="PmrD_sf"/>
</dbReference>
<dbReference type="NCBIfam" id="NF007393">
    <property type="entry name" value="PRK09919.1"/>
    <property type="match status" value="1"/>
</dbReference>
<dbReference type="PIRSF" id="PIRSF007036">
    <property type="entry name" value="Elb1"/>
    <property type="match status" value="1"/>
</dbReference>
<evidence type="ECO:0000255" key="1">
    <source>
        <dbReference type="HAMAP-Rule" id="MF_01199"/>
    </source>
</evidence>
<keyword id="KW-0963">Cytoplasm</keyword>
<keyword id="KW-0346">Stress response</keyword>
<accession>B1XA47</accession>
<gene>
    <name evidence="1" type="primary">iraM</name>
    <name type="ordered locus">ECDH10B_1209</name>
</gene>
<comment type="function">
    <text evidence="1">Inhibits RpoS proteolysis by regulating RssB activity, thereby increasing the stability of the sigma stress factor RpoS during magnesium starvation.</text>
</comment>
<comment type="subcellular location">
    <subcellularLocation>
        <location evidence="1">Cytoplasm</location>
    </subcellularLocation>
</comment>
<comment type="similarity">
    <text evidence="1">Belongs to the IraM/RssC family.</text>
</comment>
<proteinExistence type="inferred from homology"/>
<sequence>MKWIVIDTVIQPTCGISFSAIWGNMKMIIWYQSTIFLPPGSIFTPVKSGIILKDKEYPITIYHIAPFNKDLWSLLKSSQECPPGESKITNKCLHNSCIIKICPYGLK</sequence>